<evidence type="ECO:0000255" key="1">
    <source>
        <dbReference type="HAMAP-Rule" id="MF_00332"/>
    </source>
</evidence>
<evidence type="ECO:0000256" key="2">
    <source>
        <dbReference type="SAM" id="MobiDB-lite"/>
    </source>
</evidence>
<proteinExistence type="inferred from homology"/>
<keyword id="KW-0067">ATP-binding</keyword>
<keyword id="KW-0143">Chaperone</keyword>
<keyword id="KW-0547">Nucleotide-binding</keyword>
<keyword id="KW-0597">Phosphoprotein</keyword>
<keyword id="KW-0346">Stress response</keyword>
<accession>A9N8H2</accession>
<protein>
    <recommendedName>
        <fullName evidence="1">Chaperone protein DnaK</fullName>
    </recommendedName>
    <alternativeName>
        <fullName evidence="1">HSP70</fullName>
    </alternativeName>
    <alternativeName>
        <fullName evidence="1">Heat shock 70 kDa protein</fullName>
    </alternativeName>
    <alternativeName>
        <fullName evidence="1">Heat shock protein 70</fullName>
    </alternativeName>
</protein>
<name>DNAK_COXBR</name>
<gene>
    <name evidence="1" type="primary">dnaK</name>
    <name type="ordered locus">COXBURSA331_A1439</name>
</gene>
<feature type="chain" id="PRO_1000079223" description="Chaperone protein DnaK">
    <location>
        <begin position="1"/>
        <end position="656"/>
    </location>
</feature>
<feature type="region of interest" description="Disordered" evidence="2">
    <location>
        <begin position="607"/>
        <end position="656"/>
    </location>
</feature>
<feature type="compositionally biased region" description="Low complexity" evidence="2">
    <location>
        <begin position="620"/>
        <end position="632"/>
    </location>
</feature>
<feature type="compositionally biased region" description="Basic and acidic residues" evidence="2">
    <location>
        <begin position="647"/>
        <end position="656"/>
    </location>
</feature>
<feature type="modified residue" description="Phosphothreonine; by autocatalysis" evidence="1">
    <location>
        <position position="204"/>
    </location>
</feature>
<sequence length="656" mass="70755">MAEIIGIDLGTTNSCVAVMEGGKVRVIENAEGSRTTPSIVAYTKDGEVLVGASAKRQAVTNADRTLYAIKRLIGRRFDDNVVQKDIKMVPYKIIKADNGDAWVEVKDKEGKSQKLAPPQISAQVLIKMKKTAEDYLGHEVKDAVITVPAYFNDSQRQATKDAGKIAGLNVKRIINEPTAAALAYGMDKKKGDRKIAVYDLGGGTFDISIIEIAEVDGEHQFEVLATNGDTFLGGEDFDLRLIDYLAGEFKKDEGVDLHNDPLALQRLKEAAEKAKIELSSSQQTDVNLPYITADASGPKHLNIRLTRAKLESLVEDLVERTIEPCKVAIKDAGLKVSEIDDVILVGGQTRMPKVQEAVKNFFGKEARKDVNPDEAVAIGAAIQGAVLSGEVKDVLLLDVTPLSLGIETLGGVMTKLIEKNTTIPTKANQVFSTADDNQTAVTVHVLQGEREMASANKSLGRFDLSDIPPAPRGVPQIEVTFDIDANGILHVSAKDKATGKEQSIVIKASSGLSDEEVEKMVKDAEAHRDSDRKFHELVDARNQADAMIHAAEKSVKDLGSEVSADEKSAIEKAVNELKEAMKGNDKDAIEAKTKALTEHSSKLAERVYAKKGGAAGAPPGGEAEGEPQAQAGGKKEDVVDAEFEEVKDEKKKDEDK</sequence>
<reference key="1">
    <citation type="submission" date="2007-11" db="EMBL/GenBank/DDBJ databases">
        <title>Genome sequencing of phylogenetically and phenotypically diverse Coxiella burnetii isolates.</title>
        <authorList>
            <person name="Seshadri R."/>
            <person name="Samuel J.E."/>
        </authorList>
    </citation>
    <scope>NUCLEOTIDE SEQUENCE [LARGE SCALE GENOMIC DNA]</scope>
    <source>
        <strain>RSA 331 / Henzerling II</strain>
    </source>
</reference>
<organism>
    <name type="scientific">Coxiella burnetii (strain RSA 331 / Henzerling II)</name>
    <dbReference type="NCBI Taxonomy" id="360115"/>
    <lineage>
        <taxon>Bacteria</taxon>
        <taxon>Pseudomonadati</taxon>
        <taxon>Pseudomonadota</taxon>
        <taxon>Gammaproteobacteria</taxon>
        <taxon>Legionellales</taxon>
        <taxon>Coxiellaceae</taxon>
        <taxon>Coxiella</taxon>
    </lineage>
</organism>
<dbReference type="EMBL" id="CP000890">
    <property type="protein sequence ID" value="ABX78431.1"/>
    <property type="molecule type" value="Genomic_DNA"/>
</dbReference>
<dbReference type="RefSeq" id="WP_005770882.1">
    <property type="nucleotide sequence ID" value="NC_010117.1"/>
</dbReference>
<dbReference type="SMR" id="A9N8H2"/>
<dbReference type="KEGG" id="cbs:COXBURSA331_A1439"/>
<dbReference type="HOGENOM" id="CLU_005965_2_1_6"/>
<dbReference type="GO" id="GO:0005524">
    <property type="term" value="F:ATP binding"/>
    <property type="evidence" value="ECO:0007669"/>
    <property type="project" value="UniProtKB-UniRule"/>
</dbReference>
<dbReference type="GO" id="GO:0140662">
    <property type="term" value="F:ATP-dependent protein folding chaperone"/>
    <property type="evidence" value="ECO:0007669"/>
    <property type="project" value="InterPro"/>
</dbReference>
<dbReference type="GO" id="GO:0051082">
    <property type="term" value="F:unfolded protein binding"/>
    <property type="evidence" value="ECO:0007669"/>
    <property type="project" value="InterPro"/>
</dbReference>
<dbReference type="CDD" id="cd10234">
    <property type="entry name" value="ASKHA_NBD_HSP70_DnaK-like"/>
    <property type="match status" value="1"/>
</dbReference>
<dbReference type="FunFam" id="2.60.34.10:FF:000014">
    <property type="entry name" value="Chaperone protein DnaK HSP70"/>
    <property type="match status" value="1"/>
</dbReference>
<dbReference type="FunFam" id="3.30.30.30:FF:000003">
    <property type="entry name" value="Heat shock protein 9"/>
    <property type="match status" value="1"/>
</dbReference>
<dbReference type="FunFam" id="1.20.1270.10:FF:000001">
    <property type="entry name" value="Molecular chaperone DnaK"/>
    <property type="match status" value="1"/>
</dbReference>
<dbReference type="FunFam" id="3.30.420.40:FF:000004">
    <property type="entry name" value="Molecular chaperone DnaK"/>
    <property type="match status" value="1"/>
</dbReference>
<dbReference type="FunFam" id="3.90.640.10:FF:000003">
    <property type="entry name" value="Molecular chaperone DnaK"/>
    <property type="match status" value="1"/>
</dbReference>
<dbReference type="Gene3D" id="1.20.1270.10">
    <property type="match status" value="1"/>
</dbReference>
<dbReference type="Gene3D" id="3.30.420.40">
    <property type="match status" value="2"/>
</dbReference>
<dbReference type="Gene3D" id="3.90.640.10">
    <property type="entry name" value="Actin, Chain A, domain 4"/>
    <property type="match status" value="1"/>
</dbReference>
<dbReference type="Gene3D" id="2.60.34.10">
    <property type="entry name" value="Substrate Binding Domain Of DNAk, Chain A, domain 1"/>
    <property type="match status" value="1"/>
</dbReference>
<dbReference type="HAMAP" id="MF_00332">
    <property type="entry name" value="DnaK"/>
    <property type="match status" value="1"/>
</dbReference>
<dbReference type="InterPro" id="IPR043129">
    <property type="entry name" value="ATPase_NBD"/>
</dbReference>
<dbReference type="InterPro" id="IPR012725">
    <property type="entry name" value="Chaperone_DnaK"/>
</dbReference>
<dbReference type="InterPro" id="IPR018181">
    <property type="entry name" value="Heat_shock_70_CS"/>
</dbReference>
<dbReference type="InterPro" id="IPR029048">
    <property type="entry name" value="HSP70_C_sf"/>
</dbReference>
<dbReference type="InterPro" id="IPR029047">
    <property type="entry name" value="HSP70_peptide-bd_sf"/>
</dbReference>
<dbReference type="InterPro" id="IPR013126">
    <property type="entry name" value="Hsp_70_fam"/>
</dbReference>
<dbReference type="NCBIfam" id="NF001413">
    <property type="entry name" value="PRK00290.1"/>
    <property type="match status" value="1"/>
</dbReference>
<dbReference type="NCBIfam" id="NF003520">
    <property type="entry name" value="PRK05183.1"/>
    <property type="match status" value="1"/>
</dbReference>
<dbReference type="NCBIfam" id="TIGR02350">
    <property type="entry name" value="prok_dnaK"/>
    <property type="match status" value="1"/>
</dbReference>
<dbReference type="PANTHER" id="PTHR19375">
    <property type="entry name" value="HEAT SHOCK PROTEIN 70KDA"/>
    <property type="match status" value="1"/>
</dbReference>
<dbReference type="Pfam" id="PF00012">
    <property type="entry name" value="HSP70"/>
    <property type="match status" value="1"/>
</dbReference>
<dbReference type="PRINTS" id="PR00301">
    <property type="entry name" value="HEATSHOCK70"/>
</dbReference>
<dbReference type="SUPFAM" id="SSF53067">
    <property type="entry name" value="Actin-like ATPase domain"/>
    <property type="match status" value="2"/>
</dbReference>
<dbReference type="SUPFAM" id="SSF100934">
    <property type="entry name" value="Heat shock protein 70kD (HSP70), C-terminal subdomain"/>
    <property type="match status" value="1"/>
</dbReference>
<dbReference type="SUPFAM" id="SSF100920">
    <property type="entry name" value="Heat shock protein 70kD (HSP70), peptide-binding domain"/>
    <property type="match status" value="1"/>
</dbReference>
<dbReference type="PROSITE" id="PS00297">
    <property type="entry name" value="HSP70_1"/>
    <property type="match status" value="1"/>
</dbReference>
<dbReference type="PROSITE" id="PS00329">
    <property type="entry name" value="HSP70_2"/>
    <property type="match status" value="1"/>
</dbReference>
<dbReference type="PROSITE" id="PS01036">
    <property type="entry name" value="HSP70_3"/>
    <property type="match status" value="1"/>
</dbReference>
<comment type="function">
    <text evidence="1">Acts as a chaperone.</text>
</comment>
<comment type="induction">
    <text evidence="1">By stress conditions e.g. heat shock.</text>
</comment>
<comment type="similarity">
    <text evidence="1">Belongs to the heat shock protein 70 family.</text>
</comment>